<evidence type="ECO:0000255" key="1">
    <source>
        <dbReference type="HAMAP-Rule" id="MF_01549"/>
    </source>
</evidence>
<name>DSRB_SHIBS</name>
<organism>
    <name type="scientific">Shigella boydii serotype 4 (strain Sb227)</name>
    <dbReference type="NCBI Taxonomy" id="300268"/>
    <lineage>
        <taxon>Bacteria</taxon>
        <taxon>Pseudomonadati</taxon>
        <taxon>Pseudomonadota</taxon>
        <taxon>Gammaproteobacteria</taxon>
        <taxon>Enterobacterales</taxon>
        <taxon>Enterobacteriaceae</taxon>
        <taxon>Shigella</taxon>
    </lineage>
</organism>
<feature type="chain" id="PRO_0000300614" description="Protein DsrB">
    <location>
        <begin position="1"/>
        <end position="62"/>
    </location>
</feature>
<reference key="1">
    <citation type="journal article" date="2005" name="Nucleic Acids Res.">
        <title>Genome dynamics and diversity of Shigella species, the etiologic agents of bacillary dysentery.</title>
        <authorList>
            <person name="Yang F."/>
            <person name="Yang J."/>
            <person name="Zhang X."/>
            <person name="Chen L."/>
            <person name="Jiang Y."/>
            <person name="Yan Y."/>
            <person name="Tang X."/>
            <person name="Wang J."/>
            <person name="Xiong Z."/>
            <person name="Dong J."/>
            <person name="Xue Y."/>
            <person name="Zhu Y."/>
            <person name="Xu X."/>
            <person name="Sun L."/>
            <person name="Chen S."/>
            <person name="Nie H."/>
            <person name="Peng J."/>
            <person name="Xu J."/>
            <person name="Wang Y."/>
            <person name="Yuan Z."/>
            <person name="Wen Y."/>
            <person name="Yao Z."/>
            <person name="Shen Y."/>
            <person name="Qiang B."/>
            <person name="Hou Y."/>
            <person name="Yu J."/>
            <person name="Jin Q."/>
        </authorList>
    </citation>
    <scope>NUCLEOTIDE SEQUENCE [LARGE SCALE GENOMIC DNA]</scope>
    <source>
        <strain>Sb227</strain>
    </source>
</reference>
<accession>Q322Q2</accession>
<gene>
    <name evidence="1" type="primary">dsrB</name>
    <name type="ordered locus">SBO_1055</name>
</gene>
<dbReference type="EMBL" id="CP000036">
    <property type="protein sequence ID" value="ABB65706.1"/>
    <property type="molecule type" value="Genomic_DNA"/>
</dbReference>
<dbReference type="RefSeq" id="WP_000867217.1">
    <property type="nucleotide sequence ID" value="NC_007613.1"/>
</dbReference>
<dbReference type="SMR" id="Q322Q2"/>
<dbReference type="GeneID" id="93775233"/>
<dbReference type="KEGG" id="sbo:SBO_1055"/>
<dbReference type="HOGENOM" id="CLU_189289_0_0_6"/>
<dbReference type="Proteomes" id="UP000007067">
    <property type="component" value="Chromosome"/>
</dbReference>
<dbReference type="HAMAP" id="MF_01549">
    <property type="entry name" value="DsrB"/>
    <property type="match status" value="1"/>
</dbReference>
<dbReference type="InterPro" id="IPR019717">
    <property type="entry name" value="Dextransucrase_DSRB"/>
</dbReference>
<dbReference type="NCBIfam" id="NF007981">
    <property type="entry name" value="PRK10708.1"/>
    <property type="match status" value="1"/>
</dbReference>
<dbReference type="Pfam" id="PF10781">
    <property type="entry name" value="DSRB"/>
    <property type="match status" value="1"/>
</dbReference>
<comment type="similarity">
    <text evidence="1">Belongs to the DsrB family.</text>
</comment>
<proteinExistence type="inferred from homology"/>
<sequence length="62" mass="6946">MKVNDRVTVKTDGGPRRPGVVLAVEEFSEGTMYLVSLEDYPLGIWFFNEAGHQDGIFVEKAE</sequence>
<protein>
    <recommendedName>
        <fullName evidence="1">Protein DsrB</fullName>
    </recommendedName>
</protein>